<reference key="1">
    <citation type="submission" date="2008-08" db="EMBL/GenBank/DDBJ databases">
        <title>Assembling the metagenome, one cell at a time.</title>
        <authorList>
            <consortium name="US DOE Joint Genome Institute (JGI-PGF)"/>
            <person name="Woyke T."/>
            <person name="Xie G."/>
            <person name="Copeland A."/>
            <person name="Gonzalez J."/>
            <person name="Han C."/>
            <person name="Kiss H."/>
            <person name="Saw J."/>
            <person name="Senin P."/>
            <person name="Chatterji S."/>
            <person name="Cheng J.-F."/>
            <person name="Eisen J.A."/>
            <person name="Sieracki M.E."/>
            <person name="Stepanauskas R."/>
        </authorList>
    </citation>
    <scope>NUCLEOTIDE SEQUENCE [LARGE SCALE GENOMIC DNA]</scope>
    <source>
        <strain>MS024-2A</strain>
    </source>
</reference>
<reference key="2">
    <citation type="journal article" date="2012" name="Proc. Natl. Acad. Sci. U.S.A.">
        <title>Homology models guide discovery of diverse enzyme specificities among dipeptide epimerases in the enolase superfamily.</title>
        <authorList>
            <person name="Lukk T."/>
            <person name="Sakai A."/>
            <person name="Kalyanaraman C."/>
            <person name="Brown S.D."/>
            <person name="Imker H.J."/>
            <person name="Song L."/>
            <person name="Fedorov A.A."/>
            <person name="Fedorov E.V."/>
            <person name="Toro R."/>
            <person name="Hillerich B."/>
            <person name="Seidel R."/>
            <person name="Patskovsky Y."/>
            <person name="Vetting M.W."/>
            <person name="Nair S.K."/>
            <person name="Babbitt P.C."/>
            <person name="Almo S.C."/>
            <person name="Gerlt J.A."/>
            <person name="Jacobson M.P."/>
        </authorList>
    </citation>
    <scope>FUNCTION</scope>
    <scope>COFACTOR</scope>
</reference>
<comment type="function">
    <text evidence="2">Catalyzes the epimerization a variety of hydrophobic dipeptides. Epimerase activity is highest with L-Ala-L-Tyr, and lower with L-Ala-L-Met, L-Ala-L-Phe, L-Tyr-L-Ala, L-Tyr-L-Met and L-Tyr-L-Trp (in vitro).</text>
</comment>
<comment type="cofactor">
    <cofactor evidence="2">
        <name>Mg(2+)</name>
        <dbReference type="ChEBI" id="CHEBI:18420"/>
    </cofactor>
    <text evidence="2">Binds 1 Mg(2+) ion per subunit.</text>
</comment>
<comment type="miscellaneous">
    <text>Part of a large, functionally divergent protein family. Protein modeling and substrate docking was used to predict the substrate specificity, prior to biochemical analysis.</text>
</comment>
<comment type="similarity">
    <text evidence="3">Belongs to the mandelate racemase/muconate lactonizing enzyme family.</text>
</comment>
<name>HYEP_FLABM</name>
<gene>
    <name type="ORF">Flav2ADRAFT_0209</name>
</gene>
<proteinExistence type="inferred from homology"/>
<organism>
    <name type="scientific">Flavobacteria bacterium (strain MS024-2A)</name>
    <dbReference type="NCBI Taxonomy" id="487796"/>
    <lineage>
        <taxon>Bacteria</taxon>
        <taxon>Pseudomonadati</taxon>
        <taxon>Bacteroidota</taxon>
        <taxon>Flavobacteriia</taxon>
    </lineage>
</organism>
<dbReference type="EC" id="5.1.1.-"/>
<dbReference type="EMBL" id="ABVV01000007">
    <property type="protein sequence ID" value="EEG40905.1"/>
    <property type="molecule type" value="Genomic_DNA"/>
</dbReference>
<dbReference type="SMR" id="C0BK17"/>
<dbReference type="STRING" id="487796.Flav2ADRAFT_0209"/>
<dbReference type="eggNOG" id="COG4948">
    <property type="taxonomic scope" value="Bacteria"/>
</dbReference>
<dbReference type="OrthoDB" id="9775391at2"/>
<dbReference type="GO" id="GO:0000287">
    <property type="term" value="F:magnesium ion binding"/>
    <property type="evidence" value="ECO:0000314"/>
    <property type="project" value="UniProtKB"/>
</dbReference>
<dbReference type="GO" id="GO:0016854">
    <property type="term" value="F:racemase and epimerase activity"/>
    <property type="evidence" value="ECO:0000314"/>
    <property type="project" value="UniProtKB"/>
</dbReference>
<dbReference type="GO" id="GO:0016855">
    <property type="term" value="F:racemase and epimerase activity, acting on amino acids and derivatives"/>
    <property type="evidence" value="ECO:0007669"/>
    <property type="project" value="InterPro"/>
</dbReference>
<dbReference type="GO" id="GO:0009063">
    <property type="term" value="P:amino acid catabolic process"/>
    <property type="evidence" value="ECO:0007669"/>
    <property type="project" value="InterPro"/>
</dbReference>
<dbReference type="GO" id="GO:0006518">
    <property type="term" value="P:peptide metabolic process"/>
    <property type="evidence" value="ECO:0000314"/>
    <property type="project" value="UniProtKB"/>
</dbReference>
<dbReference type="CDD" id="cd03319">
    <property type="entry name" value="L-Ala-DL-Glu_epimerase"/>
    <property type="match status" value="1"/>
</dbReference>
<dbReference type="FunFam" id="3.20.20.120:FF:000029">
    <property type="entry name" value="Hydrophobic dipeptide epimerase"/>
    <property type="match status" value="1"/>
</dbReference>
<dbReference type="Gene3D" id="3.20.20.120">
    <property type="entry name" value="Enolase-like C-terminal domain"/>
    <property type="match status" value="1"/>
</dbReference>
<dbReference type="Gene3D" id="3.30.390.10">
    <property type="entry name" value="Enolase-like, N-terminal domain"/>
    <property type="match status" value="1"/>
</dbReference>
<dbReference type="InterPro" id="IPR034593">
    <property type="entry name" value="DgoD-like"/>
</dbReference>
<dbReference type="InterPro" id="IPR034603">
    <property type="entry name" value="Dipeptide_epimerase"/>
</dbReference>
<dbReference type="InterPro" id="IPR036849">
    <property type="entry name" value="Enolase-like_C_sf"/>
</dbReference>
<dbReference type="InterPro" id="IPR029017">
    <property type="entry name" value="Enolase-like_N"/>
</dbReference>
<dbReference type="InterPro" id="IPR029065">
    <property type="entry name" value="Enolase_C-like"/>
</dbReference>
<dbReference type="InterPro" id="IPR018110">
    <property type="entry name" value="Mandel_Rmase/mucon_lact_enz_CS"/>
</dbReference>
<dbReference type="InterPro" id="IPR013342">
    <property type="entry name" value="Mandelate_racemase_C"/>
</dbReference>
<dbReference type="InterPro" id="IPR013341">
    <property type="entry name" value="Mandelate_racemase_N_dom"/>
</dbReference>
<dbReference type="PANTHER" id="PTHR48080">
    <property type="entry name" value="D-GALACTONATE DEHYDRATASE-RELATED"/>
    <property type="match status" value="1"/>
</dbReference>
<dbReference type="PANTHER" id="PTHR48080:SF3">
    <property type="entry name" value="ENOLASE SUPERFAMILY MEMBER DDB_G0284701"/>
    <property type="match status" value="1"/>
</dbReference>
<dbReference type="Pfam" id="PF13378">
    <property type="entry name" value="MR_MLE_C"/>
    <property type="match status" value="1"/>
</dbReference>
<dbReference type="Pfam" id="PF02746">
    <property type="entry name" value="MR_MLE_N"/>
    <property type="match status" value="1"/>
</dbReference>
<dbReference type="SFLD" id="SFLDF00010">
    <property type="entry name" value="dipeptide_epimerase"/>
    <property type="match status" value="1"/>
</dbReference>
<dbReference type="SFLD" id="SFLDS00001">
    <property type="entry name" value="Enolase"/>
    <property type="match status" value="1"/>
</dbReference>
<dbReference type="SFLD" id="SFLDG00180">
    <property type="entry name" value="muconate_cycloisomerase"/>
    <property type="match status" value="1"/>
</dbReference>
<dbReference type="SFLD" id="SFLDF00009">
    <property type="entry name" value="o-succinylbenzoate_synthase"/>
    <property type="match status" value="1"/>
</dbReference>
<dbReference type="SMART" id="SM00922">
    <property type="entry name" value="MR_MLE"/>
    <property type="match status" value="1"/>
</dbReference>
<dbReference type="SUPFAM" id="SSF51604">
    <property type="entry name" value="Enolase C-terminal domain-like"/>
    <property type="match status" value="1"/>
</dbReference>
<dbReference type="SUPFAM" id="SSF54826">
    <property type="entry name" value="Enolase N-terminal domain-like"/>
    <property type="match status" value="1"/>
</dbReference>
<dbReference type="PROSITE" id="PS00909">
    <property type="entry name" value="MR_MLE_2"/>
    <property type="match status" value="1"/>
</dbReference>
<sequence length="349" mass="38267">MKFTFHKVTLKKRFPLAISRGVRYNSENLFVCYEKDGHIGWGEAAPGNSEGAATAEAVQEALENFIATGIEGFSIQELYDRAREMKIPPCAYVALDTAFWDWTAKKAQLPLRQLLGFSKPHTPTSVTIGINPPEVIKERVPLLLEGTTVQSLKIKLGSPEGIDADKTMFEQVVESTKKYPVKLRVDANGGWDVNQAQHMMQWLADRKVDYIEQPLKEGDEAGLKTLFKSRPLPIYVDESCRFSQNIPSFAAHVDGVNMKLMKCGGITEALRIIGTARAHGLKTMIGCMSESSVAIAAAAAMTGGIDHIDLDSHYNLAPDPAHGAPLINGVTLPPEIPGHGAYLKEEFYA</sequence>
<evidence type="ECO:0000250" key="1"/>
<evidence type="ECO:0000269" key="2">
    <source>
    </source>
</evidence>
<evidence type="ECO:0000305" key="3"/>
<feature type="chain" id="PRO_0000429645" description="Hydrophobic dipeptide epimerase">
    <location>
        <begin position="1"/>
        <end position="349"/>
    </location>
</feature>
<feature type="binding site" evidence="1">
    <location>
        <position position="127"/>
    </location>
    <ligand>
        <name>substrate</name>
    </ligand>
</feature>
<feature type="binding site" evidence="1">
    <location>
        <begin position="153"/>
        <end position="155"/>
    </location>
    <ligand>
        <name>substrate</name>
    </ligand>
</feature>
<feature type="binding site" evidence="1">
    <location>
        <position position="186"/>
    </location>
    <ligand>
        <name>Mg(2+)</name>
        <dbReference type="ChEBI" id="CHEBI:18420"/>
    </ligand>
</feature>
<feature type="binding site" evidence="1">
    <location>
        <position position="212"/>
    </location>
    <ligand>
        <name>Mg(2+)</name>
        <dbReference type="ChEBI" id="CHEBI:18420"/>
    </ligand>
</feature>
<feature type="binding site" evidence="1">
    <location>
        <position position="237"/>
    </location>
    <ligand>
        <name>Mg(2+)</name>
        <dbReference type="ChEBI" id="CHEBI:18420"/>
    </ligand>
</feature>
<feature type="binding site" evidence="1">
    <location>
        <position position="259"/>
    </location>
    <ligand>
        <name>substrate</name>
    </ligand>
</feature>
<feature type="binding site" evidence="1">
    <location>
        <begin position="309"/>
        <end position="311"/>
    </location>
    <ligand>
        <name>substrate</name>
    </ligand>
</feature>
<accession>C0BK17</accession>
<protein>
    <recommendedName>
        <fullName>Hydrophobic dipeptide epimerase</fullName>
        <ecNumber>5.1.1.-</ecNumber>
    </recommendedName>
</protein>
<keyword id="KW-0413">Isomerase</keyword>
<keyword id="KW-0460">Magnesium</keyword>
<keyword id="KW-0479">Metal-binding</keyword>